<proteinExistence type="inferred from homology"/>
<evidence type="ECO:0000255" key="1">
    <source>
        <dbReference type="HAMAP-Rule" id="MF_02115"/>
    </source>
</evidence>
<keyword id="KW-0067">ATP-binding</keyword>
<keyword id="KW-0274">FAD</keyword>
<keyword id="KW-0285">Flavoprotein</keyword>
<keyword id="KW-0288">FMN</keyword>
<keyword id="KW-0547">Nucleotide-binding</keyword>
<keyword id="KW-0548">Nucleotidyltransferase</keyword>
<keyword id="KW-0808">Transferase</keyword>
<accession>A6UNT3</accession>
<feature type="chain" id="PRO_0000406258" description="FAD synthase">
    <location>
        <begin position="1"/>
        <end position="151"/>
    </location>
</feature>
<feature type="binding site" evidence="1">
    <location>
        <begin position="12"/>
        <end position="13"/>
    </location>
    <ligand>
        <name>ATP</name>
        <dbReference type="ChEBI" id="CHEBI:30616"/>
    </ligand>
</feature>
<feature type="binding site" evidence="1">
    <location>
        <begin position="17"/>
        <end position="20"/>
    </location>
    <ligand>
        <name>ATP</name>
        <dbReference type="ChEBI" id="CHEBI:30616"/>
    </ligand>
</feature>
<feature type="binding site" evidence="1">
    <location>
        <position position="97"/>
    </location>
    <ligand>
        <name>ATP</name>
        <dbReference type="ChEBI" id="CHEBI:30616"/>
    </ligand>
</feature>
<feature type="binding site" evidence="1">
    <location>
        <position position="125"/>
    </location>
    <ligand>
        <name>ATP</name>
        <dbReference type="ChEBI" id="CHEBI:30616"/>
    </ligand>
</feature>
<dbReference type="EC" id="2.7.7.2" evidence="1"/>
<dbReference type="EMBL" id="CP000742">
    <property type="protein sequence ID" value="ABR54155.1"/>
    <property type="molecule type" value="Genomic_DNA"/>
</dbReference>
<dbReference type="RefSeq" id="WP_011972058.1">
    <property type="nucleotide sequence ID" value="NC_009634.1"/>
</dbReference>
<dbReference type="SMR" id="A6UNT3"/>
<dbReference type="STRING" id="406327.Mevan_0246"/>
<dbReference type="GeneID" id="5324948"/>
<dbReference type="KEGG" id="mvn:Mevan_0246"/>
<dbReference type="eggNOG" id="arCOG01222">
    <property type="taxonomic scope" value="Archaea"/>
</dbReference>
<dbReference type="HOGENOM" id="CLU_034585_2_1_2"/>
<dbReference type="OrthoDB" id="1912at2157"/>
<dbReference type="UniPathway" id="UPA00277">
    <property type="reaction ID" value="UER00407"/>
</dbReference>
<dbReference type="Proteomes" id="UP000001107">
    <property type="component" value="Chromosome"/>
</dbReference>
<dbReference type="GO" id="GO:0005524">
    <property type="term" value="F:ATP binding"/>
    <property type="evidence" value="ECO:0007669"/>
    <property type="project" value="UniProtKB-UniRule"/>
</dbReference>
<dbReference type="GO" id="GO:0003919">
    <property type="term" value="F:FMN adenylyltransferase activity"/>
    <property type="evidence" value="ECO:0007669"/>
    <property type="project" value="UniProtKB-UniRule"/>
</dbReference>
<dbReference type="GO" id="GO:0006747">
    <property type="term" value="P:FAD biosynthetic process"/>
    <property type="evidence" value="ECO:0007669"/>
    <property type="project" value="UniProtKB-UniRule"/>
</dbReference>
<dbReference type="GO" id="GO:0046444">
    <property type="term" value="P:FMN metabolic process"/>
    <property type="evidence" value="ECO:0007669"/>
    <property type="project" value="UniProtKB-UniRule"/>
</dbReference>
<dbReference type="Gene3D" id="3.40.50.620">
    <property type="entry name" value="HUPs"/>
    <property type="match status" value="1"/>
</dbReference>
<dbReference type="HAMAP" id="MF_02115">
    <property type="entry name" value="FAD_synth_arch"/>
    <property type="match status" value="1"/>
</dbReference>
<dbReference type="InterPro" id="IPR050385">
    <property type="entry name" value="Archaeal_FAD_synthase"/>
</dbReference>
<dbReference type="InterPro" id="IPR004821">
    <property type="entry name" value="Cyt_trans-like"/>
</dbReference>
<dbReference type="InterPro" id="IPR024902">
    <property type="entry name" value="FAD_synth_RibL"/>
</dbReference>
<dbReference type="InterPro" id="IPR014729">
    <property type="entry name" value="Rossmann-like_a/b/a_fold"/>
</dbReference>
<dbReference type="NCBIfam" id="TIGR00125">
    <property type="entry name" value="cyt_tran_rel"/>
    <property type="match status" value="1"/>
</dbReference>
<dbReference type="PANTHER" id="PTHR43793">
    <property type="entry name" value="FAD SYNTHASE"/>
    <property type="match status" value="1"/>
</dbReference>
<dbReference type="PANTHER" id="PTHR43793:SF1">
    <property type="entry name" value="FAD SYNTHASE"/>
    <property type="match status" value="1"/>
</dbReference>
<dbReference type="Pfam" id="PF01467">
    <property type="entry name" value="CTP_transf_like"/>
    <property type="match status" value="1"/>
</dbReference>
<dbReference type="SUPFAM" id="SSF52374">
    <property type="entry name" value="Nucleotidylyl transferase"/>
    <property type="match status" value="1"/>
</dbReference>
<protein>
    <recommendedName>
        <fullName evidence="1">FAD synthase</fullName>
        <ecNumber evidence="1">2.7.7.2</ecNumber>
    </recommendedName>
    <alternativeName>
        <fullName evidence="1">FMN adenylyltransferase</fullName>
    </alternativeName>
    <alternativeName>
        <fullName evidence="1">Flavin adenine dinucleotide synthase</fullName>
    </alternativeName>
</protein>
<gene>
    <name evidence="1" type="primary">ribL</name>
    <name type="ordered locus">Mevan_0246</name>
</gene>
<reference key="1">
    <citation type="submission" date="2007-06" db="EMBL/GenBank/DDBJ databases">
        <title>Complete sequence of Methanococcus vannielii SB.</title>
        <authorList>
            <consortium name="US DOE Joint Genome Institute"/>
            <person name="Copeland A."/>
            <person name="Lucas S."/>
            <person name="Lapidus A."/>
            <person name="Barry K."/>
            <person name="Glavina del Rio T."/>
            <person name="Dalin E."/>
            <person name="Tice H."/>
            <person name="Pitluck S."/>
            <person name="Chain P."/>
            <person name="Malfatti S."/>
            <person name="Shin M."/>
            <person name="Vergez L."/>
            <person name="Schmutz J."/>
            <person name="Larimer F."/>
            <person name="Land M."/>
            <person name="Hauser L."/>
            <person name="Kyrpides N."/>
            <person name="Anderson I."/>
            <person name="Sieprawska-Lupa M."/>
            <person name="Whitman W.B."/>
            <person name="Richardson P."/>
        </authorList>
    </citation>
    <scope>NUCLEOTIDE SEQUENCE [LARGE SCALE GENOMIC DNA]</scope>
    <source>
        <strain>ATCC 35089 / DSM 1224 / JCM 13029 / OCM 148 / SB</strain>
    </source>
</reference>
<organism>
    <name type="scientific">Methanococcus vannielii (strain ATCC 35089 / DSM 1224 / JCM 13029 / OCM 148 / SB)</name>
    <dbReference type="NCBI Taxonomy" id="406327"/>
    <lineage>
        <taxon>Archaea</taxon>
        <taxon>Methanobacteriati</taxon>
        <taxon>Methanobacteriota</taxon>
        <taxon>Methanomada group</taxon>
        <taxon>Methanococci</taxon>
        <taxon>Methanococcales</taxon>
        <taxon>Methanococcaceae</taxon>
        <taxon>Methanococcus</taxon>
    </lineage>
</organism>
<comment type="function">
    <text evidence="1">Catalyzes the transfer of the AMP portion of ATP to flavin mononucleotide (FMN) to produce flavin adenine dinucleotide (FAD) coenzyme.</text>
</comment>
<comment type="catalytic activity">
    <reaction evidence="1">
        <text>FMN + ATP + H(+) = FAD + diphosphate</text>
        <dbReference type="Rhea" id="RHEA:17237"/>
        <dbReference type="ChEBI" id="CHEBI:15378"/>
        <dbReference type="ChEBI" id="CHEBI:30616"/>
        <dbReference type="ChEBI" id="CHEBI:33019"/>
        <dbReference type="ChEBI" id="CHEBI:57692"/>
        <dbReference type="ChEBI" id="CHEBI:58210"/>
        <dbReference type="EC" id="2.7.7.2"/>
    </reaction>
</comment>
<comment type="cofactor">
    <cofactor evidence="1">
        <name>a divalent metal cation</name>
        <dbReference type="ChEBI" id="CHEBI:60240"/>
    </cofactor>
</comment>
<comment type="pathway">
    <text evidence="1">Cofactor biosynthesis; FAD biosynthesis; FAD from FMN: step 1/1.</text>
</comment>
<comment type="subunit">
    <text evidence="1">Homodimer.</text>
</comment>
<comment type="similarity">
    <text evidence="1">Belongs to the archaeal FAD synthase family.</text>
</comment>
<name>RIBL_METVS</name>
<sequence length="151" mass="17469">MDRKKIAVTAGTFDLLHPGHFNTLNFAKKHADELIVIIARDETVKKIKGRRPVIPEEQRKIMIEALKPVDRAVLGSLNDKLEPIININPDIIIIGPDQTTYQINELKRQLLNHGLKPEIIKVEEYVNCQFHSSYDILKEIVRRWCNKELKV</sequence>